<dbReference type="EMBL" id="CP000872">
    <property type="protein sequence ID" value="ABX63154.1"/>
    <property type="molecule type" value="Genomic_DNA"/>
</dbReference>
<dbReference type="RefSeq" id="WP_004684564.1">
    <property type="nucleotide sequence ID" value="NC_010103.1"/>
</dbReference>
<dbReference type="SMR" id="A9M9V9"/>
<dbReference type="GeneID" id="55591692"/>
<dbReference type="KEGG" id="bcs:BCAN_A2171"/>
<dbReference type="HOGENOM" id="CLU_017633_0_7_5"/>
<dbReference type="PhylomeDB" id="A9M9V9"/>
<dbReference type="PRO" id="PR:A9M9V9"/>
<dbReference type="Proteomes" id="UP000001385">
    <property type="component" value="Chromosome I"/>
</dbReference>
<dbReference type="GO" id="GO:0005737">
    <property type="term" value="C:cytoplasm"/>
    <property type="evidence" value="ECO:0007669"/>
    <property type="project" value="UniProtKB-SubCell"/>
</dbReference>
<dbReference type="GO" id="GO:0005524">
    <property type="term" value="F:ATP binding"/>
    <property type="evidence" value="ECO:0007669"/>
    <property type="project" value="InterPro"/>
</dbReference>
<dbReference type="GO" id="GO:0031072">
    <property type="term" value="F:heat shock protein binding"/>
    <property type="evidence" value="ECO:0007669"/>
    <property type="project" value="InterPro"/>
</dbReference>
<dbReference type="GO" id="GO:0051082">
    <property type="term" value="F:unfolded protein binding"/>
    <property type="evidence" value="ECO:0007669"/>
    <property type="project" value="UniProtKB-UniRule"/>
</dbReference>
<dbReference type="GO" id="GO:0008270">
    <property type="term" value="F:zinc ion binding"/>
    <property type="evidence" value="ECO:0007669"/>
    <property type="project" value="UniProtKB-UniRule"/>
</dbReference>
<dbReference type="GO" id="GO:0051085">
    <property type="term" value="P:chaperone cofactor-dependent protein refolding"/>
    <property type="evidence" value="ECO:0007669"/>
    <property type="project" value="TreeGrafter"/>
</dbReference>
<dbReference type="GO" id="GO:0006260">
    <property type="term" value="P:DNA replication"/>
    <property type="evidence" value="ECO:0007669"/>
    <property type="project" value="UniProtKB-KW"/>
</dbReference>
<dbReference type="GO" id="GO:0042026">
    <property type="term" value="P:protein refolding"/>
    <property type="evidence" value="ECO:0007669"/>
    <property type="project" value="TreeGrafter"/>
</dbReference>
<dbReference type="GO" id="GO:0009408">
    <property type="term" value="P:response to heat"/>
    <property type="evidence" value="ECO:0007669"/>
    <property type="project" value="InterPro"/>
</dbReference>
<dbReference type="CDD" id="cd06257">
    <property type="entry name" value="DnaJ"/>
    <property type="match status" value="1"/>
</dbReference>
<dbReference type="CDD" id="cd10747">
    <property type="entry name" value="DnaJ_C"/>
    <property type="match status" value="1"/>
</dbReference>
<dbReference type="CDD" id="cd10719">
    <property type="entry name" value="DnaJ_zf"/>
    <property type="match status" value="1"/>
</dbReference>
<dbReference type="FunFam" id="1.10.287.110:FF:000034">
    <property type="entry name" value="Chaperone protein DnaJ"/>
    <property type="match status" value="1"/>
</dbReference>
<dbReference type="FunFam" id="2.10.230.10:FF:000002">
    <property type="entry name" value="Molecular chaperone DnaJ"/>
    <property type="match status" value="1"/>
</dbReference>
<dbReference type="FunFam" id="2.60.260.20:FF:000004">
    <property type="entry name" value="Molecular chaperone DnaJ"/>
    <property type="match status" value="1"/>
</dbReference>
<dbReference type="Gene3D" id="1.10.287.110">
    <property type="entry name" value="DnaJ domain"/>
    <property type="match status" value="1"/>
</dbReference>
<dbReference type="Gene3D" id="2.10.230.10">
    <property type="entry name" value="Heat shock protein DnaJ, cysteine-rich domain"/>
    <property type="match status" value="1"/>
</dbReference>
<dbReference type="Gene3D" id="2.60.260.20">
    <property type="entry name" value="Urease metallochaperone UreE, N-terminal domain"/>
    <property type="match status" value="2"/>
</dbReference>
<dbReference type="HAMAP" id="MF_01152">
    <property type="entry name" value="DnaJ"/>
    <property type="match status" value="1"/>
</dbReference>
<dbReference type="InterPro" id="IPR012724">
    <property type="entry name" value="DnaJ"/>
</dbReference>
<dbReference type="InterPro" id="IPR002939">
    <property type="entry name" value="DnaJ_C"/>
</dbReference>
<dbReference type="InterPro" id="IPR001623">
    <property type="entry name" value="DnaJ_domain"/>
</dbReference>
<dbReference type="InterPro" id="IPR018253">
    <property type="entry name" value="DnaJ_domain_CS"/>
</dbReference>
<dbReference type="InterPro" id="IPR008971">
    <property type="entry name" value="HSP40/DnaJ_pept-bd"/>
</dbReference>
<dbReference type="InterPro" id="IPR001305">
    <property type="entry name" value="HSP_DnaJ_Cys-rich_dom"/>
</dbReference>
<dbReference type="InterPro" id="IPR036410">
    <property type="entry name" value="HSP_DnaJ_Cys-rich_dom_sf"/>
</dbReference>
<dbReference type="InterPro" id="IPR036869">
    <property type="entry name" value="J_dom_sf"/>
</dbReference>
<dbReference type="NCBIfam" id="TIGR02349">
    <property type="entry name" value="DnaJ_bact"/>
    <property type="match status" value="1"/>
</dbReference>
<dbReference type="NCBIfam" id="NF008035">
    <property type="entry name" value="PRK10767.1"/>
    <property type="match status" value="1"/>
</dbReference>
<dbReference type="PANTHER" id="PTHR43096:SF48">
    <property type="entry name" value="CHAPERONE PROTEIN DNAJ"/>
    <property type="match status" value="1"/>
</dbReference>
<dbReference type="PANTHER" id="PTHR43096">
    <property type="entry name" value="DNAJ HOMOLOG 1, MITOCHONDRIAL-RELATED"/>
    <property type="match status" value="1"/>
</dbReference>
<dbReference type="Pfam" id="PF00226">
    <property type="entry name" value="DnaJ"/>
    <property type="match status" value="1"/>
</dbReference>
<dbReference type="Pfam" id="PF01556">
    <property type="entry name" value="DnaJ_C"/>
    <property type="match status" value="1"/>
</dbReference>
<dbReference type="Pfam" id="PF00684">
    <property type="entry name" value="DnaJ_CXXCXGXG"/>
    <property type="match status" value="1"/>
</dbReference>
<dbReference type="PRINTS" id="PR00625">
    <property type="entry name" value="JDOMAIN"/>
</dbReference>
<dbReference type="SMART" id="SM00271">
    <property type="entry name" value="DnaJ"/>
    <property type="match status" value="1"/>
</dbReference>
<dbReference type="SUPFAM" id="SSF46565">
    <property type="entry name" value="Chaperone J-domain"/>
    <property type="match status" value="1"/>
</dbReference>
<dbReference type="SUPFAM" id="SSF57938">
    <property type="entry name" value="DnaJ/Hsp40 cysteine-rich domain"/>
    <property type="match status" value="1"/>
</dbReference>
<dbReference type="SUPFAM" id="SSF49493">
    <property type="entry name" value="HSP40/DnaJ peptide-binding domain"/>
    <property type="match status" value="2"/>
</dbReference>
<dbReference type="PROSITE" id="PS00636">
    <property type="entry name" value="DNAJ_1"/>
    <property type="match status" value="1"/>
</dbReference>
<dbReference type="PROSITE" id="PS50076">
    <property type="entry name" value="DNAJ_2"/>
    <property type="match status" value="1"/>
</dbReference>
<dbReference type="PROSITE" id="PS51188">
    <property type="entry name" value="ZF_CR"/>
    <property type="match status" value="1"/>
</dbReference>
<evidence type="ECO:0000255" key="1">
    <source>
        <dbReference type="HAMAP-Rule" id="MF_01152"/>
    </source>
</evidence>
<keyword id="KW-0143">Chaperone</keyword>
<keyword id="KW-0963">Cytoplasm</keyword>
<keyword id="KW-0235">DNA replication</keyword>
<keyword id="KW-0479">Metal-binding</keyword>
<keyword id="KW-1185">Reference proteome</keyword>
<keyword id="KW-0677">Repeat</keyword>
<keyword id="KW-0346">Stress response</keyword>
<keyword id="KW-0862">Zinc</keyword>
<keyword id="KW-0863">Zinc-finger</keyword>
<proteinExistence type="inferred from homology"/>
<reference key="1">
    <citation type="submission" date="2007-10" db="EMBL/GenBank/DDBJ databases">
        <title>Brucella canis ATCC 23365 whole genome shotgun sequencing project.</title>
        <authorList>
            <person name="Setubal J.C."/>
            <person name="Bowns C."/>
            <person name="Boyle S."/>
            <person name="Crasta O.R."/>
            <person name="Czar M.J."/>
            <person name="Dharmanolla C."/>
            <person name="Gillespie J.J."/>
            <person name="Kenyon R.W."/>
            <person name="Lu J."/>
            <person name="Mane S."/>
            <person name="Mohapatra S."/>
            <person name="Nagrani S."/>
            <person name="Purkayastha A."/>
            <person name="Rajasimha H.K."/>
            <person name="Shallom J.M."/>
            <person name="Shallom S."/>
            <person name="Shukla M."/>
            <person name="Snyder E.E."/>
            <person name="Sobral B.W."/>
            <person name="Wattam A.R."/>
            <person name="Will R."/>
            <person name="Williams K."/>
            <person name="Yoo H."/>
            <person name="Bruce D."/>
            <person name="Detter C."/>
            <person name="Munk C."/>
            <person name="Brettin T.S."/>
        </authorList>
    </citation>
    <scope>NUCLEOTIDE SEQUENCE [LARGE SCALE GENOMIC DNA]</scope>
    <source>
        <strain>ATCC 23365 / NCTC 10854 / RM-666</strain>
    </source>
</reference>
<name>DNAJ_BRUC2</name>
<sequence length="377" mass="41078">MKIDYYEALGVTRTADDKTLKAAFRKLAMQYHPDRNPDDPEAERKFKEIGEAYETLKDPQKRAAYDRFGHAAFENGGMGGGFGNGFGGAGGFADIFEDIFGEMMGGGRRRSNGGRERGADLRYNMEVTLEEAYAGKTAQIRVPTSITCDECSGSGAKPGSQPTTCTMCSGSGRVRAAQGFFSVERTCPGCNGRGQIIKDPCEKCHGQGRVTQERSLSVNIPAGIEDGTRIRLAGEGEAGLRGGPAGDLYIFLSVKPHEFFQRDGADLYCKVPISMTTAALGGQFEVSTLDGTQTRVKVPEGTQNGKQFRLKGKGMPVLRQSVTGDLYIQIDIETPQNLSKRQRELLEEFEKLSSQENSPKSAGFFSRMKEFFEGIGE</sequence>
<accession>A9M9V9</accession>
<protein>
    <recommendedName>
        <fullName evidence="1">Chaperone protein DnaJ</fullName>
    </recommendedName>
</protein>
<comment type="function">
    <text evidence="1">Participates actively in the response to hyperosmotic and heat shock by preventing the aggregation of stress-denatured proteins and by disaggregating proteins, also in an autonomous, DnaK-independent fashion. Unfolded proteins bind initially to DnaJ; upon interaction with the DnaJ-bound protein, DnaK hydrolyzes its bound ATP, resulting in the formation of a stable complex. GrpE releases ADP from DnaK; ATP binding to DnaK triggers the release of the substrate protein, thus completing the reaction cycle. Several rounds of ATP-dependent interactions between DnaJ, DnaK and GrpE are required for fully efficient folding. Also involved, together with DnaK and GrpE, in the DNA replication of plasmids through activation of initiation proteins.</text>
</comment>
<comment type="cofactor">
    <cofactor evidence="1">
        <name>Zn(2+)</name>
        <dbReference type="ChEBI" id="CHEBI:29105"/>
    </cofactor>
    <text evidence="1">Binds 2 Zn(2+) ions per monomer.</text>
</comment>
<comment type="subunit">
    <text evidence="1">Homodimer.</text>
</comment>
<comment type="subcellular location">
    <subcellularLocation>
        <location evidence="1">Cytoplasm</location>
    </subcellularLocation>
</comment>
<comment type="domain">
    <text evidence="1">The J domain is necessary and sufficient to stimulate DnaK ATPase activity. Zinc center 1 plays an important role in the autonomous, DnaK-independent chaperone activity of DnaJ. Zinc center 2 is essential for interaction with DnaK and for DnaJ activity.</text>
</comment>
<comment type="similarity">
    <text evidence="1">Belongs to the DnaJ family.</text>
</comment>
<organism>
    <name type="scientific">Brucella canis (strain ATCC 23365 / NCTC 10854 / RM-666)</name>
    <dbReference type="NCBI Taxonomy" id="483179"/>
    <lineage>
        <taxon>Bacteria</taxon>
        <taxon>Pseudomonadati</taxon>
        <taxon>Pseudomonadota</taxon>
        <taxon>Alphaproteobacteria</taxon>
        <taxon>Hyphomicrobiales</taxon>
        <taxon>Brucellaceae</taxon>
        <taxon>Brucella/Ochrobactrum group</taxon>
        <taxon>Brucella</taxon>
    </lineage>
</organism>
<feature type="chain" id="PRO_1000085151" description="Chaperone protein DnaJ">
    <location>
        <begin position="1"/>
        <end position="377"/>
    </location>
</feature>
<feature type="domain" description="J" evidence="1">
    <location>
        <begin position="4"/>
        <end position="69"/>
    </location>
</feature>
<feature type="repeat" description="CXXCXGXG motif">
    <location>
        <begin position="148"/>
        <end position="155"/>
    </location>
</feature>
<feature type="repeat" description="CXXCXGXG motif">
    <location>
        <begin position="165"/>
        <end position="172"/>
    </location>
</feature>
<feature type="repeat" description="CXXCXGXG motif">
    <location>
        <begin position="187"/>
        <end position="194"/>
    </location>
</feature>
<feature type="repeat" description="CXXCXGXG motif">
    <location>
        <begin position="201"/>
        <end position="208"/>
    </location>
</feature>
<feature type="zinc finger region" description="CR-type" evidence="1">
    <location>
        <begin position="135"/>
        <end position="213"/>
    </location>
</feature>
<feature type="binding site" evidence="1">
    <location>
        <position position="148"/>
    </location>
    <ligand>
        <name>Zn(2+)</name>
        <dbReference type="ChEBI" id="CHEBI:29105"/>
        <label>1</label>
    </ligand>
</feature>
<feature type="binding site" evidence="1">
    <location>
        <position position="151"/>
    </location>
    <ligand>
        <name>Zn(2+)</name>
        <dbReference type="ChEBI" id="CHEBI:29105"/>
        <label>1</label>
    </ligand>
</feature>
<feature type="binding site" evidence="1">
    <location>
        <position position="165"/>
    </location>
    <ligand>
        <name>Zn(2+)</name>
        <dbReference type="ChEBI" id="CHEBI:29105"/>
        <label>2</label>
    </ligand>
</feature>
<feature type="binding site" evidence="1">
    <location>
        <position position="168"/>
    </location>
    <ligand>
        <name>Zn(2+)</name>
        <dbReference type="ChEBI" id="CHEBI:29105"/>
        <label>2</label>
    </ligand>
</feature>
<feature type="binding site" evidence="1">
    <location>
        <position position="187"/>
    </location>
    <ligand>
        <name>Zn(2+)</name>
        <dbReference type="ChEBI" id="CHEBI:29105"/>
        <label>2</label>
    </ligand>
</feature>
<feature type="binding site" evidence="1">
    <location>
        <position position="190"/>
    </location>
    <ligand>
        <name>Zn(2+)</name>
        <dbReference type="ChEBI" id="CHEBI:29105"/>
        <label>2</label>
    </ligand>
</feature>
<feature type="binding site" evidence="1">
    <location>
        <position position="201"/>
    </location>
    <ligand>
        <name>Zn(2+)</name>
        <dbReference type="ChEBI" id="CHEBI:29105"/>
        <label>1</label>
    </ligand>
</feature>
<feature type="binding site" evidence="1">
    <location>
        <position position="204"/>
    </location>
    <ligand>
        <name>Zn(2+)</name>
        <dbReference type="ChEBI" id="CHEBI:29105"/>
        <label>1</label>
    </ligand>
</feature>
<gene>
    <name evidence="1" type="primary">dnaJ</name>
    <name type="ordered locus">BCAN_A2171</name>
</gene>